<feature type="signal peptide" evidence="4">
    <location>
        <begin position="1"/>
        <end position="19"/>
    </location>
</feature>
<feature type="chain" id="PRO_0000004028" description="Calsyntenin-3">
    <location>
        <begin position="20"/>
        <end position="957"/>
    </location>
</feature>
<feature type="topological domain" description="Extracellular" evidence="4">
    <location>
        <begin position="20"/>
        <end position="848"/>
    </location>
</feature>
<feature type="transmembrane region" description="Helical" evidence="4">
    <location>
        <begin position="849"/>
        <end position="869"/>
    </location>
</feature>
<feature type="topological domain" description="Cytoplasmic" evidence="4">
    <location>
        <begin position="870"/>
        <end position="957"/>
    </location>
</feature>
<feature type="domain" description="Cadherin 1" evidence="5">
    <location>
        <begin position="29"/>
        <end position="145"/>
    </location>
</feature>
<feature type="domain" description="Cadherin 2" evidence="5">
    <location>
        <begin position="146"/>
        <end position="246"/>
    </location>
</feature>
<feature type="region of interest" description="Disordered" evidence="6">
    <location>
        <begin position="916"/>
        <end position="957"/>
    </location>
</feature>
<feature type="compositionally biased region" description="Acidic residues" evidence="6">
    <location>
        <begin position="928"/>
        <end position="938"/>
    </location>
</feature>
<feature type="compositionally biased region" description="Basic and acidic residues" evidence="6">
    <location>
        <begin position="944"/>
        <end position="957"/>
    </location>
</feature>
<feature type="glycosylation site" description="N-linked (GlcNAc...) asparagine" evidence="4">
    <location>
        <position position="299"/>
    </location>
</feature>
<feature type="glycosylation site" description="N-linked (GlcNAc...) asparagine" evidence="4">
    <location>
        <position position="327"/>
    </location>
</feature>
<feature type="glycosylation site" description="N-linked (GlcNAc...) asparagine" evidence="4">
    <location>
        <position position="347"/>
    </location>
</feature>
<feature type="glycosylation site" description="N-linked (GlcNAc...) asparagine" evidence="4">
    <location>
        <position position="508"/>
    </location>
</feature>
<feature type="glycosylation site" description="N-linked (GlcNAc...) asparagine" evidence="4">
    <location>
        <position position="741"/>
    </location>
</feature>
<feature type="splice variant" id="VSP_061882" description="In isoform CLSTN3beta.">
    <original>MTLLLVSLLLASLLQISSGNKANKHKPWIEAEYQGIVMENDNTVLLNPPLFALDKDAPLRYAGEICGFRLHGSGVPFKAVILDKATGEGLIRAKEPVDCEAQKEHTFTTQAYDCVDGPDGANTKKSHKATVHVRVNDVNEFAPVFVERLYRAAVTEGKLYDRILRVEAIDGDCSPQYSQICYYEILTPNTPFLIDNDGNIENTEKLQYSGEKLYKFTVTAYDCGKKRAADDAEVEIQVKPTCKPSWQGWNKRIEYAPGAGSLALFPGIRLETCDEPLWNIQATIELQTSHVAKGCDRDNYSERALRKLCGAATGEVDLLPMPGPNANWTAGLSVHYSQDSSLIYWFNGTQAVQVPLGGPAGLGSGPQDGLSDHFTLSFWMKHSVTPSKGKKEEETIVCNTIQNEDGYSHYSLTVHGCRIAFLYWPLLESARPVKFLWKLEQVCDDEWHHYALNLEFPTVTLYTDGISFDPALIHDNGLIHPPRREPALMIGACWSEEKNKEKEKGGENSTDTTSGDPLPIHHYFHGYLAGFSVRSGRLESREVIECLYACREGLDYRDFESLGKGMKVHVNPSQSLLTLEGDDVETFNHALQHVAYMNTLRFATPGVRPLRLTTAVKCFSEESCVSIPEVEGYVVVLQPDAPQILLSGTAHFARPAVDFEGPEGVPLFPDLQITCSISHQVEAKADESWQGTVTDTRMSDEIVHNLDGCEISLVGDDLDPERESLLLDMASLQQRGLELTNRSAYLTIAGVETITVYEEILRQARYQLRHGAALYARKFRLSCSEMNGRYSSNEFIVEVNVLHSMNRVAHPSHVLSSQQFLHRGHQPPPEMAGHSLASSHRNSM</original>
    <variation>MWQVAMQMPRRALCLGVYLWGLFLHLLSQGFGAPLLCLLMLLRVLSLCTQNGAQVVFTAARSVALRAQVWSVYVFLQGGAWFAQLAGSWMTLPIRLFGAMLEPLTHMSLILLCEQAARWLVQAGAWATRSLAQVWGMATFVKLCTHSVFIGMCLWVHICLSTISSKVHVRVHMPFCLSLPVRVHAPLNLGIRMRLQGGRPGSTEVEGGTPQGETRIEQEPCRTRNLRPTRRRQMSRNRSEPRPV</variation>
    <location>
        <begin position="1"/>
        <end position="844"/>
    </location>
</feature>
<feature type="topological domain" description="Cytoplasmic" evidence="1">
    <location sequence="Q8R553-2">
        <begin position="1"/>
        <end position="21"/>
    </location>
</feature>
<feature type="intramembrane region" description="Helical" evidence="1">
    <location sequence="Q8R553-2">
        <begin position="22"/>
        <end position="42"/>
    </location>
</feature>
<feature type="topological domain" description="Cytoplasmic" evidence="1">
    <location sequence="Q8R553-2">
        <begin position="43"/>
        <end position="73"/>
    </location>
</feature>
<feature type="intramembrane region" description="Helical" evidence="1">
    <location sequence="Q8R553-2">
        <begin position="74"/>
        <end position="94"/>
    </location>
</feature>
<feature type="topological domain" description="Cytoplasmic" evidence="1">
    <location sequence="Q8R553-2">
        <begin position="95"/>
        <end position="139"/>
    </location>
</feature>
<feature type="intramembrane region" description="Helical" evidence="1">
    <location sequence="Q8R553-2">
        <begin position="140"/>
        <end position="160"/>
    </location>
</feature>
<feature type="topological domain" description="Cytoplasmic" evidence="1">
    <location sequence="Q8R553-2">
        <begin position="161"/>
        <end position="248"/>
    </location>
</feature>
<feature type="transmembrane region" description="Helical" evidence="4">
    <location sequence="Q8R553-2">
        <begin position="249"/>
        <end position="269"/>
    </location>
</feature>
<feature type="topological domain" description="Lumenal" evidence="1">
    <location sequence="Q8R553-2">
        <begin position="270"/>
        <end position="357"/>
    </location>
</feature>
<accession>Q8R553</accession>
<accession>A0A8I5ZY11</accession>
<proteinExistence type="evidence at transcript level"/>
<sequence length="957" mass="105945">MTLLLVSLLLASLLQISSGNKANKHKPWIEAEYQGIVMENDNTVLLNPPLFALDKDAPLRYAGEICGFRLHGSGVPFKAVILDKATGEGLIRAKEPVDCEAQKEHTFTTQAYDCVDGPDGANTKKSHKATVHVRVNDVNEFAPVFVERLYRAAVTEGKLYDRILRVEAIDGDCSPQYSQICYYEILTPNTPFLIDNDGNIENTEKLQYSGEKLYKFTVTAYDCGKKRAADDAEVEIQVKPTCKPSWQGWNKRIEYAPGAGSLALFPGIRLETCDEPLWNIQATIELQTSHVAKGCDRDNYSERALRKLCGAATGEVDLLPMPGPNANWTAGLSVHYSQDSSLIYWFNGTQAVQVPLGGPAGLGSGPQDGLSDHFTLSFWMKHSVTPSKGKKEEETIVCNTIQNEDGYSHYSLTVHGCRIAFLYWPLLESARPVKFLWKLEQVCDDEWHHYALNLEFPTVTLYTDGISFDPALIHDNGLIHPPRREPALMIGACWSEEKNKEKEKGGENSTDTTSGDPLPIHHYFHGYLAGFSVRSGRLESREVIECLYACREGLDYRDFESLGKGMKVHVNPSQSLLTLEGDDVETFNHALQHVAYMNTLRFATPGVRPLRLTTAVKCFSEESCVSIPEVEGYVVVLQPDAPQILLSGTAHFARPAVDFEGPEGVPLFPDLQITCSISHQVEAKADESWQGTVTDTRMSDEIVHNLDGCEISLVGDDLDPERESLLLDMASLQQRGLELTNRSAYLTIAGVETITVYEEILRQARYQLRHGAALYARKFRLSCSEMNGRYSSNEFIVEVNVLHSMNRVAHPSHVLSSQQFLHRGHQPPPEMAGHSLASSHRNSMVPSAATLIIVVCVGFLVLMVILGLVRIHSLHRRVSGTGGPSGASADPKDPDLFWDDSALTIIVNPMESYQNQQTGVAGVAGGQQEEEDSSDSEAADSPSSDERRIIESPPHRY</sequence>
<keyword id="KW-0025">Alternative splicing</keyword>
<keyword id="KW-0106">Calcium</keyword>
<keyword id="KW-0130">Cell adhesion</keyword>
<keyword id="KW-1003">Cell membrane</keyword>
<keyword id="KW-0966">Cell projection</keyword>
<keyword id="KW-0256">Endoplasmic reticulum</keyword>
<keyword id="KW-0325">Glycoprotein</keyword>
<keyword id="KW-0333">Golgi apparatus</keyword>
<keyword id="KW-0551">Lipid droplet</keyword>
<keyword id="KW-0472">Membrane</keyword>
<keyword id="KW-0628">Postsynaptic cell membrane</keyword>
<keyword id="KW-1185">Reference proteome</keyword>
<keyword id="KW-0677">Repeat</keyword>
<keyword id="KW-0732">Signal</keyword>
<keyword id="KW-0770">Synapse</keyword>
<keyword id="KW-0812">Transmembrane</keyword>
<keyword id="KW-1133">Transmembrane helix</keyword>
<keyword id="KW-0832">Ubl conjugation</keyword>
<reference key="1">
    <citation type="journal article" date="2002" name="Mol. Cell. Neurosci.">
        <title>The calsyntenins - a family of postsynaptic membrane proteins with distinct neuronal expression patterns.</title>
        <authorList>
            <person name="Hintsch G."/>
            <person name="Zurlinden A."/>
            <person name="Meskenaite V."/>
            <person name="Steuble M."/>
            <person name="Fink-Widmer K."/>
            <person name="Kinter J."/>
            <person name="Sonderegger P."/>
        </authorList>
    </citation>
    <scope>NUCLEOTIDE SEQUENCE [MRNA]</scope>
    <source>
        <strain>OFA</strain>
        <tissue>Brain</tissue>
    </source>
</reference>
<reference key="2">
    <citation type="journal article" date="2004" name="Nature">
        <title>Genome sequence of the Brown Norway rat yields insights into mammalian evolution.</title>
        <authorList>
            <person name="Gibbs R.A."/>
            <person name="Weinstock G.M."/>
            <person name="Metzker M.L."/>
            <person name="Muzny D.M."/>
            <person name="Sodergren E.J."/>
            <person name="Scherer S."/>
            <person name="Scott G."/>
            <person name="Steffen D."/>
            <person name="Worley K.C."/>
            <person name="Burch P.E."/>
            <person name="Okwuonu G."/>
            <person name="Hines S."/>
            <person name="Lewis L."/>
            <person name="Deramo C."/>
            <person name="Delgado O."/>
            <person name="Dugan-Rocha S."/>
            <person name="Miner G."/>
            <person name="Morgan M."/>
            <person name="Hawes A."/>
            <person name="Gill R."/>
            <person name="Holt R.A."/>
            <person name="Adams M.D."/>
            <person name="Amanatides P.G."/>
            <person name="Baden-Tillson H."/>
            <person name="Barnstead M."/>
            <person name="Chin S."/>
            <person name="Evans C.A."/>
            <person name="Ferriera S."/>
            <person name="Fosler C."/>
            <person name="Glodek A."/>
            <person name="Gu Z."/>
            <person name="Jennings D."/>
            <person name="Kraft C.L."/>
            <person name="Nguyen T."/>
            <person name="Pfannkoch C.M."/>
            <person name="Sitter C."/>
            <person name="Sutton G.G."/>
            <person name="Venter J.C."/>
            <person name="Woodage T."/>
            <person name="Smith D."/>
            <person name="Lee H.-M."/>
            <person name="Gustafson E."/>
            <person name="Cahill P."/>
            <person name="Kana A."/>
            <person name="Doucette-Stamm L."/>
            <person name="Weinstock K."/>
            <person name="Fechtel K."/>
            <person name="Weiss R.B."/>
            <person name="Dunn D.M."/>
            <person name="Green E.D."/>
            <person name="Blakesley R.W."/>
            <person name="Bouffard G.G."/>
            <person name="De Jong P.J."/>
            <person name="Osoegawa K."/>
            <person name="Zhu B."/>
            <person name="Marra M."/>
            <person name="Schein J."/>
            <person name="Bosdet I."/>
            <person name="Fjell C."/>
            <person name="Jones S."/>
            <person name="Krzywinski M."/>
            <person name="Mathewson C."/>
            <person name="Siddiqui A."/>
            <person name="Wye N."/>
            <person name="McPherson J."/>
            <person name="Zhao S."/>
            <person name="Fraser C.M."/>
            <person name="Shetty J."/>
            <person name="Shatsman S."/>
            <person name="Geer K."/>
            <person name="Chen Y."/>
            <person name="Abramzon S."/>
            <person name="Nierman W.C."/>
            <person name="Havlak P.H."/>
            <person name="Chen R."/>
            <person name="Durbin K.J."/>
            <person name="Egan A."/>
            <person name="Ren Y."/>
            <person name="Song X.-Z."/>
            <person name="Li B."/>
            <person name="Liu Y."/>
            <person name="Qin X."/>
            <person name="Cawley S."/>
            <person name="Cooney A.J."/>
            <person name="D'Souza L.M."/>
            <person name="Martin K."/>
            <person name="Wu J.Q."/>
            <person name="Gonzalez-Garay M.L."/>
            <person name="Jackson A.R."/>
            <person name="Kalafus K.J."/>
            <person name="McLeod M.P."/>
            <person name="Milosavljevic A."/>
            <person name="Virk D."/>
            <person name="Volkov A."/>
            <person name="Wheeler D.A."/>
            <person name="Zhang Z."/>
            <person name="Bailey J.A."/>
            <person name="Eichler E.E."/>
            <person name="Tuzun E."/>
            <person name="Birney E."/>
            <person name="Mongin E."/>
            <person name="Ureta-Vidal A."/>
            <person name="Woodwark C."/>
            <person name="Zdobnov E."/>
            <person name="Bork P."/>
            <person name="Suyama M."/>
            <person name="Torrents D."/>
            <person name="Alexandersson M."/>
            <person name="Trask B.J."/>
            <person name="Young J.M."/>
            <person name="Huang H."/>
            <person name="Wang H."/>
            <person name="Xing H."/>
            <person name="Daniels S."/>
            <person name="Gietzen D."/>
            <person name="Schmidt J."/>
            <person name="Stevens K."/>
            <person name="Vitt U."/>
            <person name="Wingrove J."/>
            <person name="Camara F."/>
            <person name="Mar Alba M."/>
            <person name="Abril J.F."/>
            <person name="Guigo R."/>
            <person name="Smit A."/>
            <person name="Dubchak I."/>
            <person name="Rubin E.M."/>
            <person name="Couronne O."/>
            <person name="Poliakov A."/>
            <person name="Huebner N."/>
            <person name="Ganten D."/>
            <person name="Goesele C."/>
            <person name="Hummel O."/>
            <person name="Kreitler T."/>
            <person name="Lee Y.-A."/>
            <person name="Monti J."/>
            <person name="Schulz H."/>
            <person name="Zimdahl H."/>
            <person name="Himmelbauer H."/>
            <person name="Lehrach H."/>
            <person name="Jacob H.J."/>
            <person name="Bromberg S."/>
            <person name="Gullings-Handley J."/>
            <person name="Jensen-Seaman M.I."/>
            <person name="Kwitek A.E."/>
            <person name="Lazar J."/>
            <person name="Pasko D."/>
            <person name="Tonellato P.J."/>
            <person name="Twigger S."/>
            <person name="Ponting C.P."/>
            <person name="Duarte J.M."/>
            <person name="Rice S."/>
            <person name="Goodstadt L."/>
            <person name="Beatson S.A."/>
            <person name="Emes R.D."/>
            <person name="Winter E.E."/>
            <person name="Webber C."/>
            <person name="Brandt P."/>
            <person name="Nyakatura G."/>
            <person name="Adetobi M."/>
            <person name="Chiaromonte F."/>
            <person name="Elnitski L."/>
            <person name="Eswara P."/>
            <person name="Hardison R.C."/>
            <person name="Hou M."/>
            <person name="Kolbe D."/>
            <person name="Makova K."/>
            <person name="Miller W."/>
            <person name="Nekrutenko A."/>
            <person name="Riemer C."/>
            <person name="Schwartz S."/>
            <person name="Taylor J."/>
            <person name="Yang S."/>
            <person name="Zhang Y."/>
            <person name="Lindpaintner K."/>
            <person name="Andrews T.D."/>
            <person name="Caccamo M."/>
            <person name="Clamp M."/>
            <person name="Clarke L."/>
            <person name="Curwen V."/>
            <person name="Durbin R.M."/>
            <person name="Eyras E."/>
            <person name="Searle S.M."/>
            <person name="Cooper G.M."/>
            <person name="Batzoglou S."/>
            <person name="Brudno M."/>
            <person name="Sidow A."/>
            <person name="Stone E.A."/>
            <person name="Payseur B.A."/>
            <person name="Bourque G."/>
            <person name="Lopez-Otin C."/>
            <person name="Puente X.S."/>
            <person name="Chakrabarti K."/>
            <person name="Chatterji S."/>
            <person name="Dewey C."/>
            <person name="Pachter L."/>
            <person name="Bray N."/>
            <person name="Yap V.B."/>
            <person name="Caspi A."/>
            <person name="Tesler G."/>
            <person name="Pevzner P.A."/>
            <person name="Haussler D."/>
            <person name="Roskin K.M."/>
            <person name="Baertsch R."/>
            <person name="Clawson H."/>
            <person name="Furey T.S."/>
            <person name="Hinrichs A.S."/>
            <person name="Karolchik D."/>
            <person name="Kent W.J."/>
            <person name="Rosenbloom K.R."/>
            <person name="Trumbower H."/>
            <person name="Weirauch M."/>
            <person name="Cooper D.N."/>
            <person name="Stenson P.D."/>
            <person name="Ma B."/>
            <person name="Brent M."/>
            <person name="Arumugam M."/>
            <person name="Shteynberg D."/>
            <person name="Copley R.R."/>
            <person name="Taylor M.S."/>
            <person name="Riethman H."/>
            <person name="Mudunuri U."/>
            <person name="Peterson J."/>
            <person name="Guyer M."/>
            <person name="Felsenfeld A."/>
            <person name="Old S."/>
            <person name="Mockrin S."/>
            <person name="Collins F.S."/>
        </authorList>
    </citation>
    <scope>NUCLEOTIDE SEQUENCE [LARGE SCALE GENOMIC DNA]</scope>
    <source>
        <strain>Brown Norway</strain>
    </source>
</reference>
<comment type="function">
    <text evidence="1 2">Postsynaptic adhesion molecule that binds to presynaptic neurexins to mediate both excitatory and inhibitory synapse formation. Promotes synapse development by acting as a cell adhesion molecule at the postsynaptic membrane, which associates with both neurexin-alpha and neurexin-beta proteins at the presynaptic membrane. Regulates the balance between excitatory and inhibitory synapses by inhibiting formation of excitatory parallel-fiber synapses and promoting formation of inhibitory synapses in the same neuron. May also be involved in ascorbate (vitamin C) uptake via its interaction with SLC23A2/SVCT2 (By similarity). Complex formation with APBA2 and APP, stabilizes APP metabolism and enhances APBA2-mediated suppression of beta-APP40 secretion, due to the retardation of intracellular APP maturation (By similarity).</text>
</comment>
<comment type="function">
    <molecule>Isoform CLSTN3beta</molecule>
    <text evidence="1">Adipose-specific isoform that plays a key role in adaptive thermogenesis. Facilitates the efficient use of stored triglyceride by promoting multilocular morphology of thermogenic adipocytes: acts by inhibiting the activity of CIDEA and CIDEC on lipid droplets, thereby preventing lipid droplet fusion and facilitating lipid utilization. May also participate in adaptive thermogenesis by promoting sympathetic innervation of thermogenic adipose tissue: acts by driving secretion of neurotrophic factor S100B from brown adipocytes, stimulating neurite outgrowth from sympathetic neurons.</text>
</comment>
<comment type="subunit">
    <text evidence="1 2">Interacts (via cadherin domains) with both alpha and beta isoforms of neurexins (NRXN1, NRXN2 and NRXN3) (By similarity). Directly interacts with APBA2. Forms a tripartite complex with APBA2 and APP (By similarity). Interacts with low affinity with KLC1 (By similarity). Interacts with SLC23A2/SVCT2 (By similarity).</text>
</comment>
<comment type="subunit">
    <molecule>Isoform CLSTN3beta</molecule>
    <text evidence="1">Interacts with CIDEA; inhibiting the lipid transferase activity of CIDEA. Interacts with CIDEC; inhibiting the lipid transferase activity of CIDEC.</text>
</comment>
<comment type="subcellular location">
    <subcellularLocation>
        <location evidence="1">Postsynaptic cell membrane</location>
        <topology evidence="4">Single-pass type I membrane protein</topology>
    </subcellularLocation>
    <subcellularLocation>
        <location evidence="1">Endoplasmic reticulum membrane</location>
        <topology evidence="4">Single-pass type I membrane protein</topology>
    </subcellularLocation>
    <subcellularLocation>
        <location evidence="1">Golgi apparatus membrane</location>
        <topology evidence="4">Single-pass type I membrane protein</topology>
    </subcellularLocation>
    <subcellularLocation>
        <location evidence="1">Cell projection</location>
        <location evidence="1">Dendrite</location>
    </subcellularLocation>
    <text evidence="1">Most prominent in the postsynaptic specializations of asymmetric (type I) synapses with both axodendritic and axospinous localization.</text>
</comment>
<comment type="subcellular location">
    <molecule>Isoform CLSTN3beta</molecule>
    <subcellularLocation>
        <location evidence="1">Lipid droplet</location>
    </subcellularLocation>
    <subcellularLocation>
        <location evidence="1">Endoplasmic reticulum membrane</location>
        <topology evidence="4">Single-pass membrane protein</topology>
    </subcellularLocation>
    <text evidence="1">Localizes to endoplasmic reticulum-lipid droplet contact sites through the partitioning of its N-terminal hydrophobic hairpins onto lipid droplets while its C-terminal transmembrane domain remains anchored in the endoplasmic reticulum.</text>
</comment>
<comment type="alternative products">
    <event type="alternative splicing"/>
    <isoform>
        <id>Q8R553-1</id>
        <name>1</name>
        <sequence type="displayed"/>
    </isoform>
    <isoform>
        <id>Q8R553-2</id>
        <name evidence="1">CLSTN3beta</name>
        <sequence type="described" ref="VSP_061882"/>
    </isoform>
</comment>
<comment type="domain">
    <text evidence="3">The cytoplasmic domain binds synaptic Ca(2+).</text>
</comment>
<comment type="PTM">
    <text evidence="2">Proteolytically processed under normal cellular conditions. A primary zeta-cleavage generates a large extracellular (soluble) N-terminal domain (sAlc) and a short C-terminal transmembrane fragment (CTF1). A secondary cleavage catalyzed by gamma-secretase within the transmembrane domain releases the beta-Alc-beta chain in the extracellular milieu and produces an intracellular fragment (AlcICD). This processing is strongly suppressed in the tripartite complex formed with APBA2 and APP, which seems to prevent the association with gamma-secretase.</text>
</comment>
<comment type="PTM">
    <molecule>Isoform CLSTN3beta</molecule>
    <text evidence="1">Ubiquitinated: endoplasmic reticulum-localized protein is ubiquitinated and degraded by the endoplasmic reticulum-associated degradation (ERAD) pathway.</text>
</comment>
<comment type="similarity">
    <text evidence="8">Belongs to the calsyntenin family.</text>
</comment>
<protein>
    <recommendedName>
        <fullName evidence="7">Calsyntenin-3</fullName>
    </recommendedName>
</protein>
<organism>
    <name type="scientific">Rattus norvegicus</name>
    <name type="common">Rat</name>
    <dbReference type="NCBI Taxonomy" id="10116"/>
    <lineage>
        <taxon>Eukaryota</taxon>
        <taxon>Metazoa</taxon>
        <taxon>Chordata</taxon>
        <taxon>Craniata</taxon>
        <taxon>Vertebrata</taxon>
        <taxon>Euteleostomi</taxon>
        <taxon>Mammalia</taxon>
        <taxon>Eutheria</taxon>
        <taxon>Euarchontoglires</taxon>
        <taxon>Glires</taxon>
        <taxon>Rodentia</taxon>
        <taxon>Myomorpha</taxon>
        <taxon>Muroidea</taxon>
        <taxon>Muridae</taxon>
        <taxon>Murinae</taxon>
        <taxon>Rattus</taxon>
    </lineage>
</organism>
<gene>
    <name evidence="9" type="primary">Clstn3</name>
    <name type="synonym">Cs3</name>
    <name type="synonym">Cstn3</name>
</gene>
<dbReference type="EMBL" id="AJ431642">
    <property type="protein sequence ID" value="CAD24292.1"/>
    <property type="molecule type" value="mRNA"/>
</dbReference>
<dbReference type="RefSeq" id="NP_599203.1">
    <molecule id="Q8R553-1"/>
    <property type="nucleotide sequence ID" value="NM_134376.1"/>
</dbReference>
<dbReference type="SMR" id="Q8R553"/>
<dbReference type="FunCoup" id="Q8R553">
    <property type="interactions" value="1577"/>
</dbReference>
<dbReference type="STRING" id="10116.ENSRNOP00000015570"/>
<dbReference type="CarbonylDB" id="Q8R553"/>
<dbReference type="GlyCosmos" id="Q8R553">
    <property type="glycosylation" value="5 sites, No reported glycans"/>
</dbReference>
<dbReference type="GlyGen" id="Q8R553">
    <property type="glycosylation" value="5 sites"/>
</dbReference>
<dbReference type="iPTMnet" id="Q8R553"/>
<dbReference type="PhosphoSitePlus" id="Q8R553"/>
<dbReference type="PaxDb" id="10116-ENSRNOP00000015570"/>
<dbReference type="Ensembl" id="ENSRNOT00000096523.1">
    <molecule id="Q8R553-2"/>
    <property type="protein sequence ID" value="ENSRNOP00000083803.1"/>
    <property type="gene ID" value="ENSRNOG00000011156.4"/>
</dbReference>
<dbReference type="GeneID" id="171393"/>
<dbReference type="KEGG" id="rno:171393"/>
<dbReference type="UCSC" id="RGD:621153">
    <molecule id="Q8R553-1"/>
    <property type="organism name" value="rat"/>
</dbReference>
<dbReference type="AGR" id="RGD:621153"/>
<dbReference type="CTD" id="9746"/>
<dbReference type="RGD" id="621153">
    <property type="gene designation" value="Clstn3"/>
</dbReference>
<dbReference type="eggNOG" id="KOG1834">
    <property type="taxonomic scope" value="Eukaryota"/>
</dbReference>
<dbReference type="GeneTree" id="ENSGT00950000183086"/>
<dbReference type="InParanoid" id="Q8R553"/>
<dbReference type="OrthoDB" id="15678at9989"/>
<dbReference type="PhylomeDB" id="Q8R553"/>
<dbReference type="PRO" id="PR:Q8R553"/>
<dbReference type="Proteomes" id="UP000002494">
    <property type="component" value="Chromosome 4"/>
</dbReference>
<dbReference type="GO" id="GO:0009986">
    <property type="term" value="C:cell surface"/>
    <property type="evidence" value="ECO:0000266"/>
    <property type="project" value="RGD"/>
</dbReference>
<dbReference type="GO" id="GO:0030425">
    <property type="term" value="C:dendrite"/>
    <property type="evidence" value="ECO:0007669"/>
    <property type="project" value="UniProtKB-SubCell"/>
</dbReference>
<dbReference type="GO" id="GO:0005789">
    <property type="term" value="C:endoplasmic reticulum membrane"/>
    <property type="evidence" value="ECO:0000250"/>
    <property type="project" value="UniProtKB"/>
</dbReference>
<dbReference type="GO" id="GO:0098982">
    <property type="term" value="C:GABA-ergic synapse"/>
    <property type="evidence" value="ECO:0000266"/>
    <property type="project" value="RGD"/>
</dbReference>
<dbReference type="GO" id="GO:0098978">
    <property type="term" value="C:glutamatergic synapse"/>
    <property type="evidence" value="ECO:0000266"/>
    <property type="project" value="RGD"/>
</dbReference>
<dbReference type="GO" id="GO:0000139">
    <property type="term" value="C:Golgi membrane"/>
    <property type="evidence" value="ECO:0007669"/>
    <property type="project" value="UniProtKB-SubCell"/>
</dbReference>
<dbReference type="GO" id="GO:0005811">
    <property type="term" value="C:lipid droplet"/>
    <property type="evidence" value="ECO:0000250"/>
    <property type="project" value="UniProtKB"/>
</dbReference>
<dbReference type="GO" id="GO:0044232">
    <property type="term" value="C:organelle membrane contact site"/>
    <property type="evidence" value="ECO:0000250"/>
    <property type="project" value="UniProtKB"/>
</dbReference>
<dbReference type="GO" id="GO:0014069">
    <property type="term" value="C:postsynaptic density"/>
    <property type="evidence" value="ECO:0000266"/>
    <property type="project" value="RGD"/>
</dbReference>
<dbReference type="GO" id="GO:0098839">
    <property type="term" value="C:postsynaptic density membrane"/>
    <property type="evidence" value="ECO:0000266"/>
    <property type="project" value="RGD"/>
</dbReference>
<dbReference type="GO" id="GO:0045211">
    <property type="term" value="C:postsynaptic membrane"/>
    <property type="evidence" value="ECO:0000314"/>
    <property type="project" value="RGD"/>
</dbReference>
<dbReference type="GO" id="GO:0032991">
    <property type="term" value="C:protein-containing complex"/>
    <property type="evidence" value="ECO:0000266"/>
    <property type="project" value="RGD"/>
</dbReference>
<dbReference type="GO" id="GO:0005509">
    <property type="term" value="F:calcium ion binding"/>
    <property type="evidence" value="ECO:0007669"/>
    <property type="project" value="InterPro"/>
</dbReference>
<dbReference type="GO" id="GO:0098632">
    <property type="term" value="F:cell-cell adhesion mediator activity"/>
    <property type="evidence" value="ECO:0000250"/>
    <property type="project" value="UniProtKB"/>
</dbReference>
<dbReference type="GO" id="GO:0004857">
    <property type="term" value="F:enzyme inhibitor activity"/>
    <property type="evidence" value="ECO:0000250"/>
    <property type="project" value="UniProtKB"/>
</dbReference>
<dbReference type="GO" id="GO:0042043">
    <property type="term" value="F:neurexin family protein binding"/>
    <property type="evidence" value="ECO:0000250"/>
    <property type="project" value="UniProtKB"/>
</dbReference>
<dbReference type="GO" id="GO:1990845">
    <property type="term" value="P:adaptive thermogenesis"/>
    <property type="evidence" value="ECO:0000250"/>
    <property type="project" value="UniProtKB"/>
</dbReference>
<dbReference type="GO" id="GO:0007268">
    <property type="term" value="P:chemical synaptic transmission"/>
    <property type="evidence" value="ECO:0000303"/>
    <property type="project" value="RGD"/>
</dbReference>
<dbReference type="GO" id="GO:0106106">
    <property type="term" value="P:cold-induced thermogenesis"/>
    <property type="evidence" value="ECO:0000250"/>
    <property type="project" value="UniProtKB"/>
</dbReference>
<dbReference type="GO" id="GO:1904861">
    <property type="term" value="P:excitatory synapse assembly"/>
    <property type="evidence" value="ECO:0000250"/>
    <property type="project" value="UniProtKB"/>
</dbReference>
<dbReference type="GO" id="GO:0007156">
    <property type="term" value="P:homophilic cell adhesion via plasma membrane adhesion molecules"/>
    <property type="evidence" value="ECO:0007669"/>
    <property type="project" value="InterPro"/>
</dbReference>
<dbReference type="GO" id="GO:1904862">
    <property type="term" value="P:inhibitory synapse assembly"/>
    <property type="evidence" value="ECO:0000250"/>
    <property type="project" value="UniProtKB"/>
</dbReference>
<dbReference type="GO" id="GO:1904890">
    <property type="term" value="P:negative regulation of excitatory synapse assembly"/>
    <property type="evidence" value="ECO:0000250"/>
    <property type="project" value="UniProtKB"/>
</dbReference>
<dbReference type="GO" id="GO:0160078">
    <property type="term" value="P:negative regulation of lipid droplet fusion"/>
    <property type="evidence" value="ECO:0000250"/>
    <property type="project" value="UniProtKB"/>
</dbReference>
<dbReference type="GO" id="GO:0010888">
    <property type="term" value="P:negative regulation of lipid storage"/>
    <property type="evidence" value="ECO:0000250"/>
    <property type="project" value="UniProtKB"/>
</dbReference>
<dbReference type="GO" id="GO:1905704">
    <property type="term" value="P:positive regulation of inhibitory synapse assembly"/>
    <property type="evidence" value="ECO:0000250"/>
    <property type="project" value="UniProtKB"/>
</dbReference>
<dbReference type="GO" id="GO:0050996">
    <property type="term" value="P:positive regulation of lipid catabolic process"/>
    <property type="evidence" value="ECO:0000250"/>
    <property type="project" value="UniProtKB"/>
</dbReference>
<dbReference type="GO" id="GO:1902474">
    <property type="term" value="P:positive regulation of protein localization to synapse"/>
    <property type="evidence" value="ECO:0000266"/>
    <property type="project" value="RGD"/>
</dbReference>
<dbReference type="GO" id="GO:0051965">
    <property type="term" value="P:positive regulation of synapse assembly"/>
    <property type="evidence" value="ECO:0000266"/>
    <property type="project" value="RGD"/>
</dbReference>
<dbReference type="GO" id="GO:0050806">
    <property type="term" value="P:positive regulation of synaptic transmission"/>
    <property type="evidence" value="ECO:0000266"/>
    <property type="project" value="RGD"/>
</dbReference>
<dbReference type="GO" id="GO:0009306">
    <property type="term" value="P:protein secretion"/>
    <property type="evidence" value="ECO:0000250"/>
    <property type="project" value="UniProtKB"/>
</dbReference>
<dbReference type="GO" id="GO:0001558">
    <property type="term" value="P:regulation of cell growth"/>
    <property type="evidence" value="ECO:0000266"/>
    <property type="project" value="RGD"/>
</dbReference>
<dbReference type="GO" id="GO:1904889">
    <property type="term" value="P:regulation of excitatory synapse assembly"/>
    <property type="evidence" value="ECO:0000250"/>
    <property type="project" value="UniProtKB"/>
</dbReference>
<dbReference type="GO" id="GO:1905606">
    <property type="term" value="P:regulation of presynapse assembly"/>
    <property type="evidence" value="ECO:0000266"/>
    <property type="project" value="RGD"/>
</dbReference>
<dbReference type="GO" id="GO:0097490">
    <property type="term" value="P:sympathetic neuron projection extension"/>
    <property type="evidence" value="ECO:0000250"/>
    <property type="project" value="UniProtKB"/>
</dbReference>
<dbReference type="GO" id="GO:0007416">
    <property type="term" value="P:synapse assembly"/>
    <property type="evidence" value="ECO:0000266"/>
    <property type="project" value="RGD"/>
</dbReference>
<dbReference type="GO" id="GO:0051932">
    <property type="term" value="P:synaptic transmission, GABAergic"/>
    <property type="evidence" value="ECO:0000266"/>
    <property type="project" value="RGD"/>
</dbReference>
<dbReference type="GO" id="GO:0035249">
    <property type="term" value="P:synaptic transmission, glutamatergic"/>
    <property type="evidence" value="ECO:0000266"/>
    <property type="project" value="RGD"/>
</dbReference>
<dbReference type="CDD" id="cd11304">
    <property type="entry name" value="Cadherin_repeat"/>
    <property type="match status" value="2"/>
</dbReference>
<dbReference type="FunFam" id="2.60.40.60:FF:000025">
    <property type="entry name" value="Calsyntenin 1"/>
    <property type="match status" value="1"/>
</dbReference>
<dbReference type="FunFam" id="2.60.120.200:FF:000069">
    <property type="entry name" value="Calsyntenin 3"/>
    <property type="match status" value="1"/>
</dbReference>
<dbReference type="FunFam" id="2.60.40.60:FF:000062">
    <property type="entry name" value="Calsyntenin 3"/>
    <property type="match status" value="1"/>
</dbReference>
<dbReference type="Gene3D" id="2.60.120.200">
    <property type="match status" value="1"/>
</dbReference>
<dbReference type="Gene3D" id="2.60.40.60">
    <property type="entry name" value="Cadherins"/>
    <property type="match status" value="2"/>
</dbReference>
<dbReference type="InterPro" id="IPR002126">
    <property type="entry name" value="Cadherin-like_dom"/>
</dbReference>
<dbReference type="InterPro" id="IPR015919">
    <property type="entry name" value="Cadherin-like_sf"/>
</dbReference>
<dbReference type="InterPro" id="IPR045588">
    <property type="entry name" value="CLSTN_C"/>
</dbReference>
<dbReference type="InterPro" id="IPR013320">
    <property type="entry name" value="ConA-like_dom_sf"/>
</dbReference>
<dbReference type="PANTHER" id="PTHR14139">
    <property type="entry name" value="CALSYNTENIN"/>
    <property type="match status" value="1"/>
</dbReference>
<dbReference type="PANTHER" id="PTHR14139:SF5">
    <property type="entry name" value="CALSYNTENIN-3"/>
    <property type="match status" value="1"/>
</dbReference>
<dbReference type="Pfam" id="PF19699">
    <property type="entry name" value="CLSTN_C"/>
    <property type="match status" value="1"/>
</dbReference>
<dbReference type="PRINTS" id="PR00205">
    <property type="entry name" value="CADHERIN"/>
</dbReference>
<dbReference type="SMART" id="SM00112">
    <property type="entry name" value="CA"/>
    <property type="match status" value="2"/>
</dbReference>
<dbReference type="SUPFAM" id="SSF49313">
    <property type="entry name" value="Cadherin-like"/>
    <property type="match status" value="2"/>
</dbReference>
<dbReference type="SUPFAM" id="SSF49899">
    <property type="entry name" value="Concanavalin A-like lectins/glucanases"/>
    <property type="match status" value="1"/>
</dbReference>
<dbReference type="PROSITE" id="PS50268">
    <property type="entry name" value="CADHERIN_2"/>
    <property type="match status" value="2"/>
</dbReference>
<name>CSTN3_RAT</name>
<evidence type="ECO:0000250" key="1">
    <source>
        <dbReference type="UniProtKB" id="Q99JH7"/>
    </source>
</evidence>
<evidence type="ECO:0000250" key="2">
    <source>
        <dbReference type="UniProtKB" id="Q9BQT9"/>
    </source>
</evidence>
<evidence type="ECO:0000250" key="3">
    <source>
        <dbReference type="UniProtKB" id="Q9EPL2"/>
    </source>
</evidence>
<evidence type="ECO:0000255" key="4"/>
<evidence type="ECO:0000255" key="5">
    <source>
        <dbReference type="PROSITE-ProRule" id="PRU00043"/>
    </source>
</evidence>
<evidence type="ECO:0000256" key="6">
    <source>
        <dbReference type="SAM" id="MobiDB-lite"/>
    </source>
</evidence>
<evidence type="ECO:0000303" key="7">
    <source>
    </source>
</evidence>
<evidence type="ECO:0000305" key="8"/>
<evidence type="ECO:0000312" key="9">
    <source>
        <dbReference type="RGD" id="621153"/>
    </source>
</evidence>